<sequence length="358" mass="40288">MDLSLAPTTTTSSDQEQDRDQELTSNIGASSSSGPSGNNNNLPMMMIPPPEKEHMFDKVVTPSDVGKLNRLVIPKQHAERYFPLDSSNNQNGTLLNFQDRNGKMWRFRYSYWNSSQSYVMTKGWSRFVKEKKLDAGDIVSFQRGIGDESERSKLYIDWRHRPDMSLVQAHQFGNFGFNFNFPTTSQYSNRFHPLPEYNSVPIHRGLNIGNHQRSYYNTQRQEFVGYGYGNLAGRCYYTGSPLDHRNIVGSEPLVIDSVPVVPGRLTPVMLPPLPPPPSTAGKRLRLFGVNMECGNDYNQQEESWLVPRGEIGASSSSSSALRLNLSTDHDDDNDDGDDGDDDQFAKKGKSSLSLNFNP</sequence>
<dbReference type="EMBL" id="AC007323">
    <property type="protein sequence ID" value="AAF26476.1"/>
    <property type="molecule type" value="Genomic_DNA"/>
</dbReference>
<dbReference type="EMBL" id="CP002684">
    <property type="protein sequence ID" value="AEE27219.1"/>
    <property type="molecule type" value="Genomic_DNA"/>
</dbReference>
<dbReference type="EMBL" id="BX814729">
    <property type="status" value="NOT_ANNOTATED_CDS"/>
    <property type="molecule type" value="mRNA"/>
</dbReference>
<dbReference type="PIR" id="B86141">
    <property type="entry name" value="B86141"/>
</dbReference>
<dbReference type="RefSeq" id="NP_171611.1">
    <property type="nucleotide sequence ID" value="NM_099985.3"/>
</dbReference>
<dbReference type="SMR" id="Q9MAN1"/>
<dbReference type="BioGRID" id="24556">
    <property type="interactions" value="4"/>
</dbReference>
<dbReference type="FunCoup" id="Q9MAN1">
    <property type="interactions" value="85"/>
</dbReference>
<dbReference type="IntAct" id="Q9MAN1">
    <property type="interactions" value="14"/>
</dbReference>
<dbReference type="STRING" id="3702.Q9MAN1"/>
<dbReference type="GlyGen" id="Q9MAN1">
    <property type="glycosylation" value="2 sites, 1 O-linked glycan (2 sites)"/>
</dbReference>
<dbReference type="PaxDb" id="3702-AT1G01030.1"/>
<dbReference type="ProteomicsDB" id="249119"/>
<dbReference type="EnsemblPlants" id="AT1G01030.1">
    <property type="protein sequence ID" value="AT1G01030.1"/>
    <property type="gene ID" value="AT1G01030"/>
</dbReference>
<dbReference type="GeneID" id="839321"/>
<dbReference type="Gramene" id="AT1G01030.1">
    <property type="protein sequence ID" value="AT1G01030.1"/>
    <property type="gene ID" value="AT1G01030"/>
</dbReference>
<dbReference type="KEGG" id="ath:AT1G01030"/>
<dbReference type="Araport" id="AT1G01030"/>
<dbReference type="TAIR" id="AT1G01030">
    <property type="gene designation" value="NGA3"/>
</dbReference>
<dbReference type="eggNOG" id="ENOG502QSHQ">
    <property type="taxonomic scope" value="Eukaryota"/>
</dbReference>
<dbReference type="HOGENOM" id="CLU_038898_3_2_1"/>
<dbReference type="InParanoid" id="Q9MAN1"/>
<dbReference type="OrthoDB" id="2020802at2759"/>
<dbReference type="PhylomeDB" id="Q9MAN1"/>
<dbReference type="PRO" id="PR:Q9MAN1"/>
<dbReference type="Proteomes" id="UP000006548">
    <property type="component" value="Chromosome 1"/>
</dbReference>
<dbReference type="ExpressionAtlas" id="Q9MAN1">
    <property type="expression patterns" value="baseline and differential"/>
</dbReference>
<dbReference type="GO" id="GO:0005634">
    <property type="term" value="C:nucleus"/>
    <property type="evidence" value="ECO:0007669"/>
    <property type="project" value="UniProtKB-SubCell"/>
</dbReference>
<dbReference type="GO" id="GO:0003677">
    <property type="term" value="F:DNA binding"/>
    <property type="evidence" value="ECO:0007669"/>
    <property type="project" value="UniProtKB-KW"/>
</dbReference>
<dbReference type="GO" id="GO:0003700">
    <property type="term" value="F:DNA-binding transcription factor activity"/>
    <property type="evidence" value="ECO:0000250"/>
    <property type="project" value="TAIR"/>
</dbReference>
<dbReference type="GO" id="GO:0009908">
    <property type="term" value="P:flower development"/>
    <property type="evidence" value="ECO:0000315"/>
    <property type="project" value="TAIR"/>
</dbReference>
<dbReference type="GO" id="GO:0048366">
    <property type="term" value="P:leaf development"/>
    <property type="evidence" value="ECO:0000315"/>
    <property type="project" value="TAIR"/>
</dbReference>
<dbReference type="GO" id="GO:0006355">
    <property type="term" value="P:regulation of DNA-templated transcription"/>
    <property type="evidence" value="ECO:0000304"/>
    <property type="project" value="TAIR"/>
</dbReference>
<dbReference type="GO" id="GO:1901371">
    <property type="term" value="P:regulation of leaf morphogenesis"/>
    <property type="evidence" value="ECO:0000316"/>
    <property type="project" value="TAIR"/>
</dbReference>
<dbReference type="CDD" id="cd10017">
    <property type="entry name" value="B3_DNA"/>
    <property type="match status" value="1"/>
</dbReference>
<dbReference type="FunFam" id="2.40.330.10:FF:000002">
    <property type="entry name" value="B3 domain-containing protein"/>
    <property type="match status" value="1"/>
</dbReference>
<dbReference type="Gene3D" id="2.40.330.10">
    <property type="entry name" value="DNA-binding pseudobarrel domain"/>
    <property type="match status" value="1"/>
</dbReference>
<dbReference type="InterPro" id="IPR003340">
    <property type="entry name" value="B3_DNA-bd"/>
</dbReference>
<dbReference type="InterPro" id="IPR015300">
    <property type="entry name" value="DNA-bd_pseudobarrel_sf"/>
</dbReference>
<dbReference type="InterPro" id="IPR044800">
    <property type="entry name" value="LEC2-like"/>
</dbReference>
<dbReference type="PANTHER" id="PTHR31140">
    <property type="entry name" value="B3 DOMAIN-CONTAINING TRANSCRIPTION FACTOR ABI3"/>
    <property type="match status" value="1"/>
</dbReference>
<dbReference type="PANTHER" id="PTHR31140:SF134">
    <property type="entry name" value="B3 DOMAIN-CONTAINING TRANSCRIPTION FACTOR NGA3"/>
    <property type="match status" value="1"/>
</dbReference>
<dbReference type="Pfam" id="PF02362">
    <property type="entry name" value="B3"/>
    <property type="match status" value="1"/>
</dbReference>
<dbReference type="SMART" id="SM01019">
    <property type="entry name" value="B3"/>
    <property type="match status" value="1"/>
</dbReference>
<dbReference type="SUPFAM" id="SSF101936">
    <property type="entry name" value="DNA-binding pseudobarrel domain"/>
    <property type="match status" value="1"/>
</dbReference>
<dbReference type="PROSITE" id="PS50863">
    <property type="entry name" value="B3"/>
    <property type="match status" value="1"/>
</dbReference>
<accession>Q9MAN1</accession>
<feature type="chain" id="PRO_0000375093" description="B3 domain-containing transcription factor NGA3">
    <location>
        <begin position="1"/>
        <end position="358"/>
    </location>
</feature>
<feature type="DNA-binding region" description="TF-B3" evidence="1">
    <location>
        <begin position="56"/>
        <end position="162"/>
    </location>
</feature>
<feature type="region of interest" description="Disordered" evidence="2">
    <location>
        <begin position="1"/>
        <end position="45"/>
    </location>
</feature>
<feature type="region of interest" description="Disordered" evidence="2">
    <location>
        <begin position="310"/>
        <end position="358"/>
    </location>
</feature>
<feature type="compositionally biased region" description="Polar residues" evidence="2">
    <location>
        <begin position="1"/>
        <end position="14"/>
    </location>
</feature>
<feature type="compositionally biased region" description="Low complexity" evidence="2">
    <location>
        <begin position="25"/>
        <end position="45"/>
    </location>
</feature>
<feature type="compositionally biased region" description="Acidic residues" evidence="2">
    <location>
        <begin position="329"/>
        <end position="342"/>
    </location>
</feature>
<gene>
    <name type="primary">NGA3</name>
    <name type="ordered locus">At1g01030</name>
    <name type="ORF">T25K16.3</name>
</gene>
<name>NGA3_ARATH</name>
<protein>
    <recommendedName>
        <fullName>B3 domain-containing transcription factor NGA3</fullName>
    </recommendedName>
    <alternativeName>
        <fullName>Protein NGATHA3</fullName>
    </alternativeName>
</protein>
<reference key="1">
    <citation type="journal article" date="2000" name="Nature">
        <title>Sequence and analysis of chromosome 1 of the plant Arabidopsis thaliana.</title>
        <authorList>
            <person name="Theologis A."/>
            <person name="Ecker J.R."/>
            <person name="Palm C.J."/>
            <person name="Federspiel N.A."/>
            <person name="Kaul S."/>
            <person name="White O."/>
            <person name="Alonso J."/>
            <person name="Altafi H."/>
            <person name="Araujo R."/>
            <person name="Bowman C.L."/>
            <person name="Brooks S.Y."/>
            <person name="Buehler E."/>
            <person name="Chan A."/>
            <person name="Chao Q."/>
            <person name="Chen H."/>
            <person name="Cheuk R.F."/>
            <person name="Chin C.W."/>
            <person name="Chung M.K."/>
            <person name="Conn L."/>
            <person name="Conway A.B."/>
            <person name="Conway A.R."/>
            <person name="Creasy T.H."/>
            <person name="Dewar K."/>
            <person name="Dunn P."/>
            <person name="Etgu P."/>
            <person name="Feldblyum T.V."/>
            <person name="Feng J.-D."/>
            <person name="Fong B."/>
            <person name="Fujii C.Y."/>
            <person name="Gill J.E."/>
            <person name="Goldsmith A.D."/>
            <person name="Haas B."/>
            <person name="Hansen N.F."/>
            <person name="Hughes B."/>
            <person name="Huizar L."/>
            <person name="Hunter J.L."/>
            <person name="Jenkins J."/>
            <person name="Johnson-Hopson C."/>
            <person name="Khan S."/>
            <person name="Khaykin E."/>
            <person name="Kim C.J."/>
            <person name="Koo H.L."/>
            <person name="Kremenetskaia I."/>
            <person name="Kurtz D.B."/>
            <person name="Kwan A."/>
            <person name="Lam B."/>
            <person name="Langin-Hooper S."/>
            <person name="Lee A."/>
            <person name="Lee J.M."/>
            <person name="Lenz C.A."/>
            <person name="Li J.H."/>
            <person name="Li Y.-P."/>
            <person name="Lin X."/>
            <person name="Liu S.X."/>
            <person name="Liu Z.A."/>
            <person name="Luros J.S."/>
            <person name="Maiti R."/>
            <person name="Marziali A."/>
            <person name="Militscher J."/>
            <person name="Miranda M."/>
            <person name="Nguyen M."/>
            <person name="Nierman W.C."/>
            <person name="Osborne B.I."/>
            <person name="Pai G."/>
            <person name="Peterson J."/>
            <person name="Pham P.K."/>
            <person name="Rizzo M."/>
            <person name="Rooney T."/>
            <person name="Rowley D."/>
            <person name="Sakano H."/>
            <person name="Salzberg S.L."/>
            <person name="Schwartz J.R."/>
            <person name="Shinn P."/>
            <person name="Southwick A.M."/>
            <person name="Sun H."/>
            <person name="Tallon L.J."/>
            <person name="Tambunga G."/>
            <person name="Toriumi M.J."/>
            <person name="Town C.D."/>
            <person name="Utterback T."/>
            <person name="Van Aken S."/>
            <person name="Vaysberg M."/>
            <person name="Vysotskaia V.S."/>
            <person name="Walker M."/>
            <person name="Wu D."/>
            <person name="Yu G."/>
            <person name="Fraser C.M."/>
            <person name="Venter J.C."/>
            <person name="Davis R.W."/>
        </authorList>
    </citation>
    <scope>NUCLEOTIDE SEQUENCE [LARGE SCALE GENOMIC DNA]</scope>
    <source>
        <strain>cv. Columbia</strain>
    </source>
</reference>
<reference key="2">
    <citation type="journal article" date="2017" name="Plant J.">
        <title>Araport11: a complete reannotation of the Arabidopsis thaliana reference genome.</title>
        <authorList>
            <person name="Cheng C.Y."/>
            <person name="Krishnakumar V."/>
            <person name="Chan A.P."/>
            <person name="Thibaud-Nissen F."/>
            <person name="Schobel S."/>
            <person name="Town C.D."/>
        </authorList>
    </citation>
    <scope>GENOME REANNOTATION</scope>
    <source>
        <strain>cv. Columbia</strain>
    </source>
</reference>
<reference key="3">
    <citation type="journal article" date="2004" name="Genome Res.">
        <title>Whole genome sequence comparisons and 'full-length' cDNA sequences: a combined approach to evaluate and improve Arabidopsis genome annotation.</title>
        <authorList>
            <person name="Castelli V."/>
            <person name="Aury J.-M."/>
            <person name="Jaillon O."/>
            <person name="Wincker P."/>
            <person name="Clepet C."/>
            <person name="Menard M."/>
            <person name="Cruaud C."/>
            <person name="Quetier F."/>
            <person name="Scarpelli C."/>
            <person name="Schaechter V."/>
            <person name="Temple G."/>
            <person name="Caboche M."/>
            <person name="Weissenbach J."/>
            <person name="Salanoubat M."/>
        </authorList>
    </citation>
    <scope>NUCLEOTIDE SEQUENCE [LARGE SCALE MRNA]</scope>
    <source>
        <strain>cv. Columbia</strain>
    </source>
</reference>
<reference key="4">
    <citation type="journal article" date="2006" name="Plant Cell">
        <title>Endogenous and synthetic microRNAs stimulate simultaneous, efficient, and localized regulation of multiple targets in diverse species.</title>
        <authorList>
            <person name="Alvarez J.P."/>
            <person name="Pekker I."/>
            <person name="Goldshmidt A."/>
            <person name="Blum E."/>
            <person name="Amsellem Z."/>
            <person name="Eshed Y."/>
        </authorList>
    </citation>
    <scope>FUNCTION</scope>
</reference>
<reference key="5">
    <citation type="journal article" date="2008" name="Trends Plant Sci.">
        <title>The plant B3 superfamily.</title>
        <authorList>
            <person name="Swaminathan K."/>
            <person name="Peterson K."/>
            <person name="Jack T."/>
        </authorList>
    </citation>
    <scope>GENE FAMILY</scope>
</reference>
<organism>
    <name type="scientific">Arabidopsis thaliana</name>
    <name type="common">Mouse-ear cress</name>
    <dbReference type="NCBI Taxonomy" id="3702"/>
    <lineage>
        <taxon>Eukaryota</taxon>
        <taxon>Viridiplantae</taxon>
        <taxon>Streptophyta</taxon>
        <taxon>Embryophyta</taxon>
        <taxon>Tracheophyta</taxon>
        <taxon>Spermatophyta</taxon>
        <taxon>Magnoliopsida</taxon>
        <taxon>eudicotyledons</taxon>
        <taxon>Gunneridae</taxon>
        <taxon>Pentapetalae</taxon>
        <taxon>rosids</taxon>
        <taxon>malvids</taxon>
        <taxon>Brassicales</taxon>
        <taxon>Brassicaceae</taxon>
        <taxon>Camelineae</taxon>
        <taxon>Arabidopsis</taxon>
    </lineage>
</organism>
<evidence type="ECO:0000255" key="1">
    <source>
        <dbReference type="PROSITE-ProRule" id="PRU00326"/>
    </source>
</evidence>
<evidence type="ECO:0000256" key="2">
    <source>
        <dbReference type="SAM" id="MobiDB-lite"/>
    </source>
</evidence>
<evidence type="ECO:0000269" key="3">
    <source>
    </source>
</evidence>
<evidence type="ECO:0000305" key="4"/>
<comment type="function">
    <text evidence="3">Regulates lateral organ growth. Functionally redundant with NGA1, NGA2 and NGA4.</text>
</comment>
<comment type="interaction">
    <interactant intactId="EBI-15216492">
        <id>Q9MAN1</id>
    </interactant>
    <interactant intactId="EBI-15191983">
        <id>A0A1I9LTW1</id>
        <label>At3g54390</label>
    </interactant>
    <organismsDiffer>false</organismsDiffer>
    <experiments>3</experiments>
</comment>
<comment type="interaction">
    <interactant intactId="EBI-15216492">
        <id>Q9MAN1</id>
    </interactant>
    <interactant intactId="EBI-3946408">
        <id>Q8H174</id>
        <label>IAA31</label>
    </interactant>
    <organismsDiffer>false</organismsDiffer>
    <experiments>3</experiments>
</comment>
<comment type="subcellular location">
    <subcellularLocation>
        <location evidence="1">Nucleus</location>
    </subcellularLocation>
</comment>
<comment type="sequence caution" evidence="4">
    <conflict type="miscellaneous discrepancy">
        <sequence resource="EMBL" id="BX814729"/>
    </conflict>
    <text>Sequencing errors.</text>
</comment>
<proteinExistence type="evidence at protein level"/>
<keyword id="KW-0238">DNA-binding</keyword>
<keyword id="KW-0539">Nucleus</keyword>
<keyword id="KW-1185">Reference proteome</keyword>
<keyword id="KW-0804">Transcription</keyword>
<keyword id="KW-0805">Transcription regulation</keyword>